<keyword id="KW-0119">Carbohydrate metabolism</keyword>
<keyword id="KW-1015">Disulfide bond</keyword>
<keyword id="KW-0326">Glycosidase</keyword>
<keyword id="KW-0378">Hydrolase</keyword>
<keyword id="KW-0624">Polysaccharide degradation</keyword>
<keyword id="KW-0964">Secreted</keyword>
<keyword id="KW-0732">Signal</keyword>
<keyword id="KW-0858">Xylan degradation</keyword>
<gene>
    <name type="primary">xlnC</name>
</gene>
<feature type="signal peptide" evidence="2">
    <location>
        <begin position="1"/>
        <end position="19"/>
    </location>
</feature>
<feature type="chain" id="PRO_0000393193" description="Probable endo-1,4-beta-xylanase C">
    <location>
        <begin position="20"/>
        <end position="326"/>
    </location>
</feature>
<feature type="domain" description="GH10" evidence="3">
    <location>
        <begin position="46"/>
        <end position="325"/>
    </location>
</feature>
<feature type="active site" description="Proton donor" evidence="1">
    <location>
        <position position="156"/>
    </location>
</feature>
<feature type="active site" description="Nucleophile" evidence="1">
    <location>
        <position position="262"/>
    </location>
</feature>
<feature type="disulfide bond" evidence="1">
    <location>
        <begin position="280"/>
        <end position="286"/>
    </location>
</feature>
<comment type="function">
    <text evidence="1">Endo-1,4-beta-xylanase involved in the hydrolysis of xylan, a major structural heterogeneous polysaccharide found in plant biomass representing the second most abundant polysaccharide in the biosphere, after cellulose.</text>
</comment>
<comment type="catalytic activity">
    <reaction>
        <text>Endohydrolysis of (1-&gt;4)-beta-D-xylosidic linkages in xylans.</text>
        <dbReference type="EC" id="3.2.1.8"/>
    </reaction>
</comment>
<comment type="pathway">
    <text>Glycan degradation; xylan degradation.</text>
</comment>
<comment type="subcellular location">
    <subcellularLocation>
        <location evidence="1">Secreted</location>
    </subcellularLocation>
</comment>
<comment type="induction">
    <text>Expressed in presence of xylan and repressed by glucose.</text>
</comment>
<comment type="similarity">
    <text evidence="4">Belongs to the glycosyl hydrolase 10 (cellulase F) family.</text>
</comment>
<accession>Q4JHP5</accession>
<dbReference type="EC" id="3.2.1.8"/>
<dbReference type="EMBL" id="DQ087436">
    <property type="protein sequence ID" value="AAY86996.1"/>
    <property type="molecule type" value="mRNA"/>
</dbReference>
<dbReference type="SMR" id="Q4JHP5"/>
<dbReference type="CAZy" id="GH10">
    <property type="family name" value="Glycoside Hydrolase Family 10"/>
</dbReference>
<dbReference type="VEuPathDB" id="FungiDB:ATEG_08906"/>
<dbReference type="UniPathway" id="UPA00114"/>
<dbReference type="GO" id="GO:0005576">
    <property type="term" value="C:extracellular region"/>
    <property type="evidence" value="ECO:0000250"/>
    <property type="project" value="UniProtKB"/>
</dbReference>
<dbReference type="GO" id="GO:0031176">
    <property type="term" value="F:endo-1,4-beta-xylanase activity"/>
    <property type="evidence" value="ECO:0000250"/>
    <property type="project" value="UniProtKB"/>
</dbReference>
<dbReference type="GO" id="GO:0045493">
    <property type="term" value="P:xylan catabolic process"/>
    <property type="evidence" value="ECO:0000250"/>
    <property type="project" value="UniProtKB"/>
</dbReference>
<dbReference type="FunFam" id="3.20.20.80:FF:000094">
    <property type="entry name" value="Endo-1,4-beta-xylanase"/>
    <property type="match status" value="1"/>
</dbReference>
<dbReference type="Gene3D" id="3.20.20.80">
    <property type="entry name" value="Glycosidases"/>
    <property type="match status" value="1"/>
</dbReference>
<dbReference type="InterPro" id="IPR044846">
    <property type="entry name" value="GH10"/>
</dbReference>
<dbReference type="InterPro" id="IPR001000">
    <property type="entry name" value="GH10_dom"/>
</dbReference>
<dbReference type="InterPro" id="IPR017853">
    <property type="entry name" value="Glycoside_hydrolase_SF"/>
</dbReference>
<dbReference type="PANTHER" id="PTHR31490:SF76">
    <property type="entry name" value="ENDO-1,4-BETA-XYLANASE C"/>
    <property type="match status" value="1"/>
</dbReference>
<dbReference type="PANTHER" id="PTHR31490">
    <property type="entry name" value="GLYCOSYL HYDROLASE"/>
    <property type="match status" value="1"/>
</dbReference>
<dbReference type="Pfam" id="PF00331">
    <property type="entry name" value="Glyco_hydro_10"/>
    <property type="match status" value="1"/>
</dbReference>
<dbReference type="PRINTS" id="PR00134">
    <property type="entry name" value="GLHYDRLASE10"/>
</dbReference>
<dbReference type="SMART" id="SM00633">
    <property type="entry name" value="Glyco_10"/>
    <property type="match status" value="1"/>
</dbReference>
<dbReference type="SUPFAM" id="SSF51445">
    <property type="entry name" value="(Trans)glycosidases"/>
    <property type="match status" value="1"/>
</dbReference>
<dbReference type="PROSITE" id="PS51760">
    <property type="entry name" value="GH10_2"/>
    <property type="match status" value="1"/>
</dbReference>
<name>XYNC_ASPTE</name>
<evidence type="ECO:0000250" key="1"/>
<evidence type="ECO:0000255" key="2"/>
<evidence type="ECO:0000255" key="3">
    <source>
        <dbReference type="PROSITE-ProRule" id="PRU01096"/>
    </source>
</evidence>
<evidence type="ECO:0000305" key="4"/>
<protein>
    <recommendedName>
        <fullName>Probable endo-1,4-beta-xylanase C</fullName>
        <shortName>Xylanase C</shortName>
        <ecNumber>3.2.1.8</ecNumber>
    </recommendedName>
    <alternativeName>
        <fullName>1,4-beta-D-xylan xylanohydrolase C</fullName>
    </alternativeName>
</protein>
<sequence length="326" mass="35346">MVRLTVLAGFLLTSAACSACVIGERQAASSINNAFKAKGKKYFGTCGDQGTLSDSTNSAIVKADFGQLTPENSMKWDATEPNRGQFSFGGADYLVNYAASNGKMIRGHTLVWHSQLPGWVQGITDKNTLTSVLKNHITTVMQRYKGKVYAWDVVNEIFNEDGSLRKSVFYNVLGEDFVRIAFETARSVDPQAKLYINDYNLDNANYAKTKGMADHVRKWISQGIPIDGIGSQTHLGSGGSWTVKDALNTLASSGVSEVAITELDIAGASSTDYVNVVNACLSVSKCVGITVWGVSDKYSWRSNDKPLLFDSNFQPKAAYNAIISAL</sequence>
<reference key="1">
    <citation type="journal article" date="2006" name="Protein Expr. Purif.">
        <title>Cloning, expression, and characterization of a xylanase 10 from Aspergillus terreus (BCC129) in Pichia pastoris.</title>
        <authorList>
            <person name="Chantasingh D."/>
            <person name="Pootanakit K."/>
            <person name="Champreda V."/>
            <person name="Kanokratana P."/>
            <person name="Eurwilaichitr L."/>
        </authorList>
    </citation>
    <scope>NUCLEOTIDE SEQUENCE [MRNA]</scope>
    <source>
        <strain>BCC129</strain>
    </source>
</reference>
<proteinExistence type="evidence at transcript level"/>
<organism>
    <name type="scientific">Aspergillus terreus</name>
    <dbReference type="NCBI Taxonomy" id="33178"/>
    <lineage>
        <taxon>Eukaryota</taxon>
        <taxon>Fungi</taxon>
        <taxon>Dikarya</taxon>
        <taxon>Ascomycota</taxon>
        <taxon>Pezizomycotina</taxon>
        <taxon>Eurotiomycetes</taxon>
        <taxon>Eurotiomycetidae</taxon>
        <taxon>Eurotiales</taxon>
        <taxon>Aspergillaceae</taxon>
        <taxon>Aspergillus</taxon>
        <taxon>Aspergillus subgen. Circumdati</taxon>
    </lineage>
</organism>